<evidence type="ECO:0000250" key="1"/>
<evidence type="ECO:0000305" key="2"/>
<accession>F4I169</accession>
<accession>Q9LMQ7</accession>
<dbReference type="EMBL" id="AC034256">
    <property type="protein sequence ID" value="AAF82147.1"/>
    <property type="status" value="ALT_SEQ"/>
    <property type="molecule type" value="Genomic_DNA"/>
</dbReference>
<dbReference type="EMBL" id="CP002684">
    <property type="protein sequence ID" value="AEE29362.1"/>
    <property type="molecule type" value="Genomic_DNA"/>
</dbReference>
<dbReference type="PIR" id="A86292">
    <property type="entry name" value="A86292"/>
</dbReference>
<dbReference type="RefSeq" id="NP_173029.2">
    <property type="nucleotide sequence ID" value="NM_101445.3"/>
</dbReference>
<dbReference type="BioGRID" id="23386">
    <property type="interactions" value="4"/>
</dbReference>
<dbReference type="STRING" id="3702.F4I169"/>
<dbReference type="PaxDb" id="3702-AT1G15770.1"/>
<dbReference type="EnsemblPlants" id="AT1G15770.1">
    <property type="protein sequence ID" value="AT1G15770.1"/>
    <property type="gene ID" value="AT1G15770"/>
</dbReference>
<dbReference type="GeneID" id="838146"/>
<dbReference type="Gramene" id="AT1G15770.1">
    <property type="protein sequence ID" value="AT1G15770.1"/>
    <property type="gene ID" value="AT1G15770"/>
</dbReference>
<dbReference type="KEGG" id="ath:AT1G15770"/>
<dbReference type="Araport" id="AT1G15770"/>
<dbReference type="TAIR" id="AT1G15770"/>
<dbReference type="eggNOG" id="ENOG502QQV3">
    <property type="taxonomic scope" value="Eukaryota"/>
</dbReference>
<dbReference type="HOGENOM" id="CLU_951061_0_0_1"/>
<dbReference type="InParanoid" id="F4I169"/>
<dbReference type="OMA" id="LQERNFM"/>
<dbReference type="PRO" id="PR:F4I169"/>
<dbReference type="Proteomes" id="UP000006548">
    <property type="component" value="Chromosome 1"/>
</dbReference>
<dbReference type="ExpressionAtlas" id="F4I169">
    <property type="expression patterns" value="baseline and differential"/>
</dbReference>
<dbReference type="GO" id="GO:0005634">
    <property type="term" value="C:nucleus"/>
    <property type="evidence" value="ECO:0007669"/>
    <property type="project" value="UniProtKB-SubCell"/>
</dbReference>
<dbReference type="GO" id="GO:0031490">
    <property type="term" value="F:chromatin DNA binding"/>
    <property type="evidence" value="ECO:0007669"/>
    <property type="project" value="InterPro"/>
</dbReference>
<dbReference type="GO" id="GO:0003713">
    <property type="term" value="F:transcription coactivator activity"/>
    <property type="evidence" value="ECO:0007669"/>
    <property type="project" value="InterPro"/>
</dbReference>
<dbReference type="InterPro" id="IPR044661">
    <property type="entry name" value="MED15a/b/c-like"/>
</dbReference>
<dbReference type="PANTHER" id="PTHR33137">
    <property type="entry name" value="MEDIATOR OF RNA POLYMERASE II TRANSCRIPTION SUBUNIT 15A-RELATED"/>
    <property type="match status" value="1"/>
</dbReference>
<dbReference type="PANTHER" id="PTHR33137:SF4">
    <property type="entry name" value="MEDIATOR OF RNA POLYMERASE II TRANSCRIPTION SUBUNIT 15A-RELATED"/>
    <property type="match status" value="1"/>
</dbReference>
<gene>
    <name type="primary">MED15B</name>
    <name type="synonym">MED15_1</name>
    <name type="ordered locus">At1g15770</name>
    <name type="ORF">F7H2.11</name>
</gene>
<name>MD15B_ARATH</name>
<feature type="chain" id="PRO_0000418349" description="Probable mediator of RNA polymerase II transcription subunit 15b">
    <location>
        <begin position="1"/>
        <end position="293"/>
    </location>
</feature>
<keyword id="KW-0539">Nucleus</keyword>
<keyword id="KW-1185">Reference proteome</keyword>
<keyword id="KW-0804">Transcription</keyword>
<keyword id="KW-0805">Transcription regulation</keyword>
<proteinExistence type="inferred from homology"/>
<comment type="function">
    <text evidence="1">Component of the Mediator complex, a coactivator involved in the regulated transcription of nearly all RNA polymerase II-dependent genes. Mediator functions as a bridge to convey information from gene-specific regulatory proteins to the basal RNA polymerase II transcription machinery. The Mediator complex, having a compact conformation in its free form, is recruited to promoters by direct interactions with regulatory proteins and serves for the assembly of a functional preinitiation complex with RNA polymerase II and the general transcription factors (By similarity).</text>
</comment>
<comment type="subunit">
    <text evidence="2">Component of the Mediator complex.</text>
</comment>
<comment type="subcellular location">
    <subcellularLocation>
        <location evidence="2">Nucleus</location>
    </subcellularLocation>
</comment>
<comment type="similarity">
    <text evidence="2">Belongs to the plant Mediator complex subunit 15 family.</text>
</comment>
<comment type="sequence caution" evidence="2">
    <conflict type="erroneous gene model prediction">
        <sequence resource="EMBL-CDS" id="AAF82147"/>
    </conflict>
</comment>
<sequence>MIILLFFVDQIHQRDLNEIYQRVAAKLQQEDSLSHQKQRSDQFEKLKRGKTVLEGMLRFLSLSKSNIKPDLKDSMDYRKNNIMNFLNMQSLRKTVQKLQLTKSEIQPMQQPLSQTVQDQSHDDQTTLQMQSMSMQGAGSRVQQIRQGVLQSLEIGTPGISASPLLPELTSPDGNIINPLTSTCGKSSATELPIERLIRAMKSISPQALSSAVCDIRSVVSMVDRIAGSVPGKGSRASFGVDLVAMTKCHLQERNFMTQDGDHEKEASDNPNAIKCCFIGRKALVIATSILLVW</sequence>
<reference key="1">
    <citation type="journal article" date="2000" name="Nature">
        <title>Sequence and analysis of chromosome 1 of the plant Arabidopsis thaliana.</title>
        <authorList>
            <person name="Theologis A."/>
            <person name="Ecker J.R."/>
            <person name="Palm C.J."/>
            <person name="Federspiel N.A."/>
            <person name="Kaul S."/>
            <person name="White O."/>
            <person name="Alonso J."/>
            <person name="Altafi H."/>
            <person name="Araujo R."/>
            <person name="Bowman C.L."/>
            <person name="Brooks S.Y."/>
            <person name="Buehler E."/>
            <person name="Chan A."/>
            <person name="Chao Q."/>
            <person name="Chen H."/>
            <person name="Cheuk R.F."/>
            <person name="Chin C.W."/>
            <person name="Chung M.K."/>
            <person name="Conn L."/>
            <person name="Conway A.B."/>
            <person name="Conway A.R."/>
            <person name="Creasy T.H."/>
            <person name="Dewar K."/>
            <person name="Dunn P."/>
            <person name="Etgu P."/>
            <person name="Feldblyum T.V."/>
            <person name="Feng J.-D."/>
            <person name="Fong B."/>
            <person name="Fujii C.Y."/>
            <person name="Gill J.E."/>
            <person name="Goldsmith A.D."/>
            <person name="Haas B."/>
            <person name="Hansen N.F."/>
            <person name="Hughes B."/>
            <person name="Huizar L."/>
            <person name="Hunter J.L."/>
            <person name="Jenkins J."/>
            <person name="Johnson-Hopson C."/>
            <person name="Khan S."/>
            <person name="Khaykin E."/>
            <person name="Kim C.J."/>
            <person name="Koo H.L."/>
            <person name="Kremenetskaia I."/>
            <person name="Kurtz D.B."/>
            <person name="Kwan A."/>
            <person name="Lam B."/>
            <person name="Langin-Hooper S."/>
            <person name="Lee A."/>
            <person name="Lee J.M."/>
            <person name="Lenz C.A."/>
            <person name="Li J.H."/>
            <person name="Li Y.-P."/>
            <person name="Lin X."/>
            <person name="Liu S.X."/>
            <person name="Liu Z.A."/>
            <person name="Luros J.S."/>
            <person name="Maiti R."/>
            <person name="Marziali A."/>
            <person name="Militscher J."/>
            <person name="Miranda M."/>
            <person name="Nguyen M."/>
            <person name="Nierman W.C."/>
            <person name="Osborne B.I."/>
            <person name="Pai G."/>
            <person name="Peterson J."/>
            <person name="Pham P.K."/>
            <person name="Rizzo M."/>
            <person name="Rooney T."/>
            <person name="Rowley D."/>
            <person name="Sakano H."/>
            <person name="Salzberg S.L."/>
            <person name="Schwartz J.R."/>
            <person name="Shinn P."/>
            <person name="Southwick A.M."/>
            <person name="Sun H."/>
            <person name="Tallon L.J."/>
            <person name="Tambunga G."/>
            <person name="Toriumi M.J."/>
            <person name="Town C.D."/>
            <person name="Utterback T."/>
            <person name="Van Aken S."/>
            <person name="Vaysberg M."/>
            <person name="Vysotskaia V.S."/>
            <person name="Walker M."/>
            <person name="Wu D."/>
            <person name="Yu G."/>
            <person name="Fraser C.M."/>
            <person name="Venter J.C."/>
            <person name="Davis R.W."/>
        </authorList>
    </citation>
    <scope>NUCLEOTIDE SEQUENCE [LARGE SCALE GENOMIC DNA]</scope>
    <source>
        <strain>cv. Columbia</strain>
    </source>
</reference>
<reference key="2">
    <citation type="journal article" date="2017" name="Plant J.">
        <title>Araport11: a complete reannotation of the Arabidopsis thaliana reference genome.</title>
        <authorList>
            <person name="Cheng C.Y."/>
            <person name="Krishnakumar V."/>
            <person name="Chan A.P."/>
            <person name="Thibaud-Nissen F."/>
            <person name="Schobel S."/>
            <person name="Town C.D."/>
        </authorList>
    </citation>
    <scope>GENOME REANNOTATION</scope>
    <source>
        <strain>cv. Columbia</strain>
    </source>
</reference>
<reference key="3">
    <citation type="journal article" date="2011" name="Plant Physiol.">
        <title>The Mediator complex in plants: structure, phylogeny, and expression profiling of representative genes in a dicot (Arabidopsis) and a monocot (rice) during reproduction and abiotic stress.</title>
        <authorList>
            <person name="Mathur S."/>
            <person name="Vyas S."/>
            <person name="Kapoor S."/>
            <person name="Tyagi A.K."/>
        </authorList>
    </citation>
    <scope>IDENTIFICATION</scope>
    <scope>NOMENCLATURE</scope>
</reference>
<organism>
    <name type="scientific">Arabidopsis thaliana</name>
    <name type="common">Mouse-ear cress</name>
    <dbReference type="NCBI Taxonomy" id="3702"/>
    <lineage>
        <taxon>Eukaryota</taxon>
        <taxon>Viridiplantae</taxon>
        <taxon>Streptophyta</taxon>
        <taxon>Embryophyta</taxon>
        <taxon>Tracheophyta</taxon>
        <taxon>Spermatophyta</taxon>
        <taxon>Magnoliopsida</taxon>
        <taxon>eudicotyledons</taxon>
        <taxon>Gunneridae</taxon>
        <taxon>Pentapetalae</taxon>
        <taxon>rosids</taxon>
        <taxon>malvids</taxon>
        <taxon>Brassicales</taxon>
        <taxon>Brassicaceae</taxon>
        <taxon>Camelineae</taxon>
        <taxon>Arabidopsis</taxon>
    </lineage>
</organism>
<protein>
    <recommendedName>
        <fullName>Probable mediator of RNA polymerase II transcription subunit 15b</fullName>
    </recommendedName>
</protein>